<keyword id="KW-0067">ATP-binding</keyword>
<keyword id="KW-0963">Cytoplasm</keyword>
<keyword id="KW-0227">DNA damage</keyword>
<keyword id="KW-0234">DNA repair</keyword>
<keyword id="KW-0235">DNA replication</keyword>
<keyword id="KW-0238">DNA-binding</keyword>
<keyword id="KW-0547">Nucleotide-binding</keyword>
<keyword id="KW-1185">Reference proteome</keyword>
<keyword id="KW-0742">SOS response</keyword>
<organism>
    <name type="scientific">Idiomarina loihiensis (strain ATCC BAA-735 / DSM 15497 / L2-TR)</name>
    <dbReference type="NCBI Taxonomy" id="283942"/>
    <lineage>
        <taxon>Bacteria</taxon>
        <taxon>Pseudomonadati</taxon>
        <taxon>Pseudomonadota</taxon>
        <taxon>Gammaproteobacteria</taxon>
        <taxon>Alteromonadales</taxon>
        <taxon>Idiomarinaceae</taxon>
        <taxon>Idiomarina</taxon>
    </lineage>
</organism>
<evidence type="ECO:0000255" key="1">
    <source>
        <dbReference type="HAMAP-Rule" id="MF_00365"/>
    </source>
</evidence>
<gene>
    <name evidence="1" type="primary">recF</name>
    <name type="ordered locus">IL0003</name>
</gene>
<accession>Q5QY37</accession>
<dbReference type="EMBL" id="AE017340">
    <property type="protein sequence ID" value="AAV80847.1"/>
    <property type="molecule type" value="Genomic_DNA"/>
</dbReference>
<dbReference type="RefSeq" id="WP_011233267.1">
    <property type="nucleotide sequence ID" value="NC_006512.1"/>
</dbReference>
<dbReference type="SMR" id="Q5QY37"/>
<dbReference type="STRING" id="283942.IL0003"/>
<dbReference type="DNASU" id="3173470"/>
<dbReference type="GeneID" id="41335151"/>
<dbReference type="KEGG" id="ilo:IL0003"/>
<dbReference type="eggNOG" id="COG1195">
    <property type="taxonomic scope" value="Bacteria"/>
</dbReference>
<dbReference type="HOGENOM" id="CLU_040267_0_0_6"/>
<dbReference type="OrthoDB" id="9803889at2"/>
<dbReference type="Proteomes" id="UP000001171">
    <property type="component" value="Chromosome"/>
</dbReference>
<dbReference type="GO" id="GO:0005737">
    <property type="term" value="C:cytoplasm"/>
    <property type="evidence" value="ECO:0007669"/>
    <property type="project" value="UniProtKB-SubCell"/>
</dbReference>
<dbReference type="GO" id="GO:0005524">
    <property type="term" value="F:ATP binding"/>
    <property type="evidence" value="ECO:0007669"/>
    <property type="project" value="UniProtKB-UniRule"/>
</dbReference>
<dbReference type="GO" id="GO:0003697">
    <property type="term" value="F:single-stranded DNA binding"/>
    <property type="evidence" value="ECO:0007669"/>
    <property type="project" value="UniProtKB-UniRule"/>
</dbReference>
<dbReference type="GO" id="GO:0006260">
    <property type="term" value="P:DNA replication"/>
    <property type="evidence" value="ECO:0007669"/>
    <property type="project" value="UniProtKB-UniRule"/>
</dbReference>
<dbReference type="GO" id="GO:0000731">
    <property type="term" value="P:DNA synthesis involved in DNA repair"/>
    <property type="evidence" value="ECO:0007669"/>
    <property type="project" value="TreeGrafter"/>
</dbReference>
<dbReference type="GO" id="GO:0006302">
    <property type="term" value="P:double-strand break repair"/>
    <property type="evidence" value="ECO:0007669"/>
    <property type="project" value="TreeGrafter"/>
</dbReference>
<dbReference type="GO" id="GO:0009432">
    <property type="term" value="P:SOS response"/>
    <property type="evidence" value="ECO:0007669"/>
    <property type="project" value="UniProtKB-UniRule"/>
</dbReference>
<dbReference type="Gene3D" id="3.40.50.300">
    <property type="entry name" value="P-loop containing nucleotide triphosphate hydrolases"/>
    <property type="match status" value="1"/>
</dbReference>
<dbReference type="Gene3D" id="1.20.1050.90">
    <property type="entry name" value="RecF/RecN/SMC, N-terminal domain"/>
    <property type="match status" value="1"/>
</dbReference>
<dbReference type="HAMAP" id="MF_00365">
    <property type="entry name" value="RecF"/>
    <property type="match status" value="1"/>
</dbReference>
<dbReference type="InterPro" id="IPR001238">
    <property type="entry name" value="DNA-binding_RecF"/>
</dbReference>
<dbReference type="InterPro" id="IPR018078">
    <property type="entry name" value="DNA-binding_RecF_CS"/>
</dbReference>
<dbReference type="InterPro" id="IPR027417">
    <property type="entry name" value="P-loop_NTPase"/>
</dbReference>
<dbReference type="InterPro" id="IPR003395">
    <property type="entry name" value="RecF/RecN/SMC_N"/>
</dbReference>
<dbReference type="InterPro" id="IPR042174">
    <property type="entry name" value="RecF_2"/>
</dbReference>
<dbReference type="NCBIfam" id="TIGR00611">
    <property type="entry name" value="recf"/>
    <property type="match status" value="1"/>
</dbReference>
<dbReference type="PANTHER" id="PTHR32182">
    <property type="entry name" value="DNA REPLICATION AND REPAIR PROTEIN RECF"/>
    <property type="match status" value="1"/>
</dbReference>
<dbReference type="PANTHER" id="PTHR32182:SF0">
    <property type="entry name" value="DNA REPLICATION AND REPAIR PROTEIN RECF"/>
    <property type="match status" value="1"/>
</dbReference>
<dbReference type="Pfam" id="PF02463">
    <property type="entry name" value="SMC_N"/>
    <property type="match status" value="1"/>
</dbReference>
<dbReference type="SUPFAM" id="SSF52540">
    <property type="entry name" value="P-loop containing nucleoside triphosphate hydrolases"/>
    <property type="match status" value="1"/>
</dbReference>
<dbReference type="PROSITE" id="PS00617">
    <property type="entry name" value="RECF_1"/>
    <property type="match status" value="1"/>
</dbReference>
<comment type="function">
    <text evidence="1">The RecF protein is involved in DNA metabolism; it is required for DNA replication and normal SOS inducibility. RecF binds preferentially to single-stranded, linear DNA. It also seems to bind ATP.</text>
</comment>
<comment type="subcellular location">
    <subcellularLocation>
        <location evidence="1">Cytoplasm</location>
    </subcellularLocation>
</comment>
<comment type="similarity">
    <text evidence="1">Belongs to the RecF family.</text>
</comment>
<protein>
    <recommendedName>
        <fullName evidence="1">DNA replication and repair protein RecF</fullName>
    </recommendedName>
</protein>
<name>RECF_IDILO</name>
<sequence length="354" mass="40402">MFIETLNLSHFRNFSEVALSPSPKINIITGDNGSGKTSLLEAIYLLGFGRSFRPGGFRQLIKEGNSGFTVFCRSQDYAIGVRRSTDGEQSLRLNGANVQRMSDVARLVPVQLLTPESVDILLEGPGQRRQFIDWGVFHVEHSFYSDWVAYTQLLKQRNSLLKQRSLPVREDRYWKEQLAYYGERISKSREKYLEELNDYIQELAKSFLSDVTMEVRLKSGWDTSQSLFDALESHTEKDKKYGFTSVGAHKADIKVIADGVEVKHRLSRGQLKTAITALKLAQGKHYQKIKRQPCIYLVDDLTSELDSKNQALLCRELENLDAQVFITAITGKQLSDKFQKSPRMFHVEHGVINE</sequence>
<reference key="1">
    <citation type="journal article" date="2004" name="Proc. Natl. Acad. Sci. U.S.A.">
        <title>Genome sequence of the deep-sea gamma-proteobacterium Idiomarina loihiensis reveals amino acid fermentation as a source of carbon and energy.</title>
        <authorList>
            <person name="Hou S."/>
            <person name="Saw J.H."/>
            <person name="Lee K.S."/>
            <person name="Freitas T.A."/>
            <person name="Belisle C."/>
            <person name="Kawarabayasi Y."/>
            <person name="Donachie S.P."/>
            <person name="Pikina A."/>
            <person name="Galperin M.Y."/>
            <person name="Koonin E.V."/>
            <person name="Makarova K.S."/>
            <person name="Omelchenko M.V."/>
            <person name="Sorokin A."/>
            <person name="Wolf Y.I."/>
            <person name="Li Q.X."/>
            <person name="Keum Y.S."/>
            <person name="Campbell S."/>
            <person name="Denery J."/>
            <person name="Aizawa S."/>
            <person name="Shibata S."/>
            <person name="Malahoff A."/>
            <person name="Alam M."/>
        </authorList>
    </citation>
    <scope>NUCLEOTIDE SEQUENCE [LARGE SCALE GENOMIC DNA]</scope>
    <source>
        <strain>ATCC BAA-735 / DSM 15497 / L2-TR</strain>
    </source>
</reference>
<feature type="chain" id="PRO_0000236123" description="DNA replication and repair protein RecF">
    <location>
        <begin position="1"/>
        <end position="354"/>
    </location>
</feature>
<feature type="binding site" evidence="1">
    <location>
        <begin position="30"/>
        <end position="37"/>
    </location>
    <ligand>
        <name>ATP</name>
        <dbReference type="ChEBI" id="CHEBI:30616"/>
    </ligand>
</feature>
<proteinExistence type="inferred from homology"/>